<name>Y271_META1</name>
<protein>
    <recommendedName>
        <fullName evidence="1">Probable transcriptional regulatory protein MARTH_orf271</fullName>
    </recommendedName>
</protein>
<dbReference type="EMBL" id="CP001047">
    <property type="protein sequence ID" value="ACF07174.1"/>
    <property type="molecule type" value="Genomic_DNA"/>
</dbReference>
<dbReference type="RefSeq" id="WP_012498131.1">
    <property type="nucleotide sequence ID" value="NC_011025.1"/>
</dbReference>
<dbReference type="SMR" id="B3PMC2"/>
<dbReference type="STRING" id="243272.MARTH_orf271"/>
<dbReference type="KEGG" id="mat:MARTH_orf271"/>
<dbReference type="eggNOG" id="COG0217">
    <property type="taxonomic scope" value="Bacteria"/>
</dbReference>
<dbReference type="HOGENOM" id="CLU_062974_2_2_14"/>
<dbReference type="Proteomes" id="UP000008812">
    <property type="component" value="Chromosome"/>
</dbReference>
<dbReference type="GO" id="GO:0005829">
    <property type="term" value="C:cytosol"/>
    <property type="evidence" value="ECO:0007669"/>
    <property type="project" value="TreeGrafter"/>
</dbReference>
<dbReference type="GO" id="GO:0003677">
    <property type="term" value="F:DNA binding"/>
    <property type="evidence" value="ECO:0007669"/>
    <property type="project" value="UniProtKB-UniRule"/>
</dbReference>
<dbReference type="GO" id="GO:0006355">
    <property type="term" value="P:regulation of DNA-templated transcription"/>
    <property type="evidence" value="ECO:0007669"/>
    <property type="project" value="UniProtKB-UniRule"/>
</dbReference>
<dbReference type="FunFam" id="1.10.10.200:FF:000002">
    <property type="entry name" value="Probable transcriptional regulatory protein CLM62_37755"/>
    <property type="match status" value="1"/>
</dbReference>
<dbReference type="Gene3D" id="1.10.10.200">
    <property type="match status" value="1"/>
</dbReference>
<dbReference type="Gene3D" id="3.30.70.980">
    <property type="match status" value="2"/>
</dbReference>
<dbReference type="HAMAP" id="MF_00693">
    <property type="entry name" value="Transcrip_reg_TACO1"/>
    <property type="match status" value="1"/>
</dbReference>
<dbReference type="InterPro" id="IPR017856">
    <property type="entry name" value="Integrase-like_N"/>
</dbReference>
<dbReference type="InterPro" id="IPR048300">
    <property type="entry name" value="TACO1_YebC-like_2nd/3rd_dom"/>
</dbReference>
<dbReference type="InterPro" id="IPR049083">
    <property type="entry name" value="TACO1_YebC_N"/>
</dbReference>
<dbReference type="InterPro" id="IPR002876">
    <property type="entry name" value="Transcrip_reg_TACO1-like"/>
</dbReference>
<dbReference type="InterPro" id="IPR026564">
    <property type="entry name" value="Transcrip_reg_TACO1-like_dom3"/>
</dbReference>
<dbReference type="InterPro" id="IPR029072">
    <property type="entry name" value="YebC-like"/>
</dbReference>
<dbReference type="NCBIfam" id="NF001030">
    <property type="entry name" value="PRK00110.1"/>
    <property type="match status" value="1"/>
</dbReference>
<dbReference type="NCBIfam" id="NF009044">
    <property type="entry name" value="PRK12378.1"/>
    <property type="match status" value="1"/>
</dbReference>
<dbReference type="NCBIfam" id="TIGR01033">
    <property type="entry name" value="YebC/PmpR family DNA-binding transcriptional regulator"/>
    <property type="match status" value="1"/>
</dbReference>
<dbReference type="PANTHER" id="PTHR12532:SF6">
    <property type="entry name" value="TRANSCRIPTIONAL REGULATORY PROTEIN YEBC-RELATED"/>
    <property type="match status" value="1"/>
</dbReference>
<dbReference type="PANTHER" id="PTHR12532">
    <property type="entry name" value="TRANSLATIONAL ACTIVATOR OF CYTOCHROME C OXIDASE 1"/>
    <property type="match status" value="1"/>
</dbReference>
<dbReference type="Pfam" id="PF20772">
    <property type="entry name" value="TACO1_YebC_N"/>
    <property type="match status" value="1"/>
</dbReference>
<dbReference type="Pfam" id="PF01709">
    <property type="entry name" value="Transcrip_reg"/>
    <property type="match status" value="1"/>
</dbReference>
<dbReference type="SUPFAM" id="SSF75625">
    <property type="entry name" value="YebC-like"/>
    <property type="match status" value="1"/>
</dbReference>
<proteinExistence type="inferred from homology"/>
<comment type="subcellular location">
    <subcellularLocation>
        <location evidence="1">Cytoplasm</location>
    </subcellularLocation>
</comment>
<comment type="similarity">
    <text evidence="1">Belongs to the TACO1 family.</text>
</comment>
<organism>
    <name type="scientific">Metamycoplasma arthritidis (strain 158L3-1)</name>
    <name type="common">Mycoplasma arthritidis</name>
    <dbReference type="NCBI Taxonomy" id="243272"/>
    <lineage>
        <taxon>Bacteria</taxon>
        <taxon>Bacillati</taxon>
        <taxon>Mycoplasmatota</taxon>
        <taxon>Mycoplasmoidales</taxon>
        <taxon>Metamycoplasmataceae</taxon>
        <taxon>Metamycoplasma</taxon>
    </lineage>
</organism>
<reference key="1">
    <citation type="journal article" date="2008" name="Infect. Immun.">
        <title>Genome of Mycoplasma arthritidis.</title>
        <authorList>
            <person name="Dybvig K."/>
            <person name="Zuhua C."/>
            <person name="Lao P."/>
            <person name="Jordan D.S."/>
            <person name="French C.T."/>
            <person name="Tu A.H."/>
            <person name="Loraine A.E."/>
        </authorList>
    </citation>
    <scope>NUCLEOTIDE SEQUENCE [LARGE SCALE GENOMIC DNA]</scope>
    <source>
        <strain>158L3-1</strain>
    </source>
</reference>
<keyword id="KW-0963">Cytoplasm</keyword>
<keyword id="KW-0238">DNA-binding</keyword>
<keyword id="KW-1185">Reference proteome</keyword>
<keyword id="KW-0804">Transcription</keyword>
<keyword id="KW-0805">Transcription regulation</keyword>
<gene>
    <name type="ordered locus">MARTH_orf271</name>
</gene>
<accession>B3PMC2</accession>
<evidence type="ECO:0000255" key="1">
    <source>
        <dbReference type="HAMAP-Rule" id="MF_00693"/>
    </source>
</evidence>
<sequence length="245" mass="26971">MSGHSKWATTKNHKFAQDAKRSKMFQKFSKEIIVAATLGGADPDSNPALKLAIAKAKAKSMPKANIEKAIAKVAGGSKDGANYVSYLYSGTAMGGVTFLISCLSDNFNRLSSNIKHYFTKHNGQLGKQGAIPYVFDQKGIIEIAKSDAAEDELMMVALEAGASDFFSEDDSFIIYSEPTNFQVLKQTLDDNFKIENYLTAEVTYIANTEVDVDKAKLEQIEAFVSLLEDDDDIQEVYHNAYCEDN</sequence>
<feature type="chain" id="PRO_1000132216" description="Probable transcriptional regulatory protein MARTH_orf271">
    <location>
        <begin position="1"/>
        <end position="245"/>
    </location>
</feature>